<proteinExistence type="evidence at protein level"/>
<name>RDH10_BOVIN</name>
<keyword id="KW-0256">Endoplasmic reticulum</keyword>
<keyword id="KW-0443">Lipid metabolism</keyword>
<keyword id="KW-0472">Membrane</keyword>
<keyword id="KW-0492">Microsome</keyword>
<keyword id="KW-0521">NADP</keyword>
<keyword id="KW-0560">Oxidoreductase</keyword>
<keyword id="KW-1185">Reference proteome</keyword>
<keyword id="KW-0735">Signal-anchor</keyword>
<keyword id="KW-0812">Transmembrane</keyword>
<keyword id="KW-1133">Transmembrane helix</keyword>
<sequence length="341" mass="38087">MNIVVEFFVVTFKVLWAFVLAAARWLVRPKEKSVAGQVCLITGAGSGLGRLFALEFARRRALLVLWDINTQSNEETAGMVRHIYRDLEAADAAALQAGNGEEEILPHCNLQVFTYTCDVGKRENVYLTAERVRKEVGEVSVLVNNAGVVSGHHLLECPDELIERTMMVNCHAHFWTTKAFLPTMLEINHGHIVTVASSLGLFSTAGVEDYCASKFGVVGFHESLSHELKAAEKDGIKTTLVCPYLVDTGMFRGCRIRKEIEPFLPPLKPDYCVKQAMKAILTDQPMICTPRLMYIVTFMKSILPFEAVVCMYRFLGADKCMYPFIAQRKQATNNNEAKNGI</sequence>
<protein>
    <recommendedName>
        <fullName>Retinol dehydrogenase 10</fullName>
        <ecNumber>1.1.1.300</ecNumber>
    </recommendedName>
</protein>
<dbReference type="EC" id="1.1.1.300"/>
<dbReference type="EMBL" id="AF456766">
    <property type="protein sequence ID" value="AAN64748.1"/>
    <property type="molecule type" value="mRNA"/>
</dbReference>
<dbReference type="EMBL" id="BC134557">
    <property type="protein sequence ID" value="AAI34558.1"/>
    <property type="molecule type" value="mRNA"/>
</dbReference>
<dbReference type="RefSeq" id="NP_777159.1">
    <property type="nucleotide sequence ID" value="NM_174734.2"/>
</dbReference>
<dbReference type="SMR" id="Q8HZT6"/>
<dbReference type="FunCoup" id="Q8HZT6">
    <property type="interactions" value="516"/>
</dbReference>
<dbReference type="STRING" id="9913.ENSBTAP00000026830"/>
<dbReference type="PaxDb" id="9913-ENSBTAP00000026830"/>
<dbReference type="Ensembl" id="ENSBTAT00000026830.6">
    <property type="protein sequence ID" value="ENSBTAP00000026830.4"/>
    <property type="gene ID" value="ENSBTAG00000020143.6"/>
</dbReference>
<dbReference type="GeneID" id="282852"/>
<dbReference type="KEGG" id="bta:282852"/>
<dbReference type="CTD" id="157506"/>
<dbReference type="VEuPathDB" id="HostDB:ENSBTAG00000020143"/>
<dbReference type="VGNC" id="VGNC:33841">
    <property type="gene designation" value="RDH10"/>
</dbReference>
<dbReference type="eggNOG" id="KOG1201">
    <property type="taxonomic scope" value="Eukaryota"/>
</dbReference>
<dbReference type="GeneTree" id="ENSGT00940000157063"/>
<dbReference type="HOGENOM" id="CLU_010194_2_5_1"/>
<dbReference type="InParanoid" id="Q8HZT6"/>
<dbReference type="OMA" id="KQAMNNN"/>
<dbReference type="OrthoDB" id="5840532at2759"/>
<dbReference type="TreeFam" id="TF312837"/>
<dbReference type="BRENDA" id="1.1.1.315">
    <property type="organism ID" value="908"/>
</dbReference>
<dbReference type="Reactome" id="R-BTA-2453902">
    <property type="pathway name" value="The canonical retinoid cycle in rods (twilight vision)"/>
</dbReference>
<dbReference type="Reactome" id="R-BTA-5365859">
    <property type="pathway name" value="RA biosynthesis pathway"/>
</dbReference>
<dbReference type="UniPathway" id="UPA00912"/>
<dbReference type="Proteomes" id="UP000009136">
    <property type="component" value="Chromosome 14"/>
</dbReference>
<dbReference type="Bgee" id="ENSBTAG00000020143">
    <property type="expression patterns" value="Expressed in uterine horn and 105 other cell types or tissues"/>
</dbReference>
<dbReference type="GO" id="GO:0005789">
    <property type="term" value="C:endoplasmic reticulum membrane"/>
    <property type="evidence" value="ECO:0007669"/>
    <property type="project" value="UniProtKB-SubCell"/>
</dbReference>
<dbReference type="GO" id="GO:0005811">
    <property type="term" value="C:lipid droplet"/>
    <property type="evidence" value="ECO:0000318"/>
    <property type="project" value="GO_Central"/>
</dbReference>
<dbReference type="GO" id="GO:0004745">
    <property type="term" value="F:all-trans-retinol dehydrogenase (NAD+) activity"/>
    <property type="evidence" value="ECO:0007669"/>
    <property type="project" value="Ensembl"/>
</dbReference>
<dbReference type="GO" id="GO:0052650">
    <property type="term" value="F:all-trans-retinol dehydrogenase (NADP+) activity"/>
    <property type="evidence" value="ECO:0007669"/>
    <property type="project" value="UniProtKB-EC"/>
</dbReference>
<dbReference type="GO" id="GO:0016616">
    <property type="term" value="F:oxidoreductase activity, acting on the CH-OH group of donors, NAD or NADP as acceptor"/>
    <property type="evidence" value="ECO:0000318"/>
    <property type="project" value="GO_Central"/>
</dbReference>
<dbReference type="GO" id="GO:0060449">
    <property type="term" value="P:bud elongation involved in lung branching"/>
    <property type="evidence" value="ECO:0007669"/>
    <property type="project" value="Ensembl"/>
</dbReference>
<dbReference type="GO" id="GO:0043583">
    <property type="term" value="P:ear development"/>
    <property type="evidence" value="ECO:0007669"/>
    <property type="project" value="Ensembl"/>
</dbReference>
<dbReference type="GO" id="GO:0031076">
    <property type="term" value="P:embryonic camera-type eye development"/>
    <property type="evidence" value="ECO:0007669"/>
    <property type="project" value="Ensembl"/>
</dbReference>
<dbReference type="GO" id="GO:0035115">
    <property type="term" value="P:embryonic forelimb morphogenesis"/>
    <property type="evidence" value="ECO:0007669"/>
    <property type="project" value="Ensembl"/>
</dbReference>
<dbReference type="GO" id="GO:0048703">
    <property type="term" value="P:embryonic viscerocranium morphogenesis"/>
    <property type="evidence" value="ECO:0007669"/>
    <property type="project" value="Ensembl"/>
</dbReference>
<dbReference type="GO" id="GO:0008406">
    <property type="term" value="P:gonad development"/>
    <property type="evidence" value="ECO:0007669"/>
    <property type="project" value="Ensembl"/>
</dbReference>
<dbReference type="GO" id="GO:0001701">
    <property type="term" value="P:in utero embryonic development"/>
    <property type="evidence" value="ECO:0007669"/>
    <property type="project" value="Ensembl"/>
</dbReference>
<dbReference type="GO" id="GO:0001656">
    <property type="term" value="P:metanephros development"/>
    <property type="evidence" value="ECO:0007669"/>
    <property type="project" value="Ensembl"/>
</dbReference>
<dbReference type="GO" id="GO:0014032">
    <property type="term" value="P:neural crest cell development"/>
    <property type="evidence" value="ECO:0007669"/>
    <property type="project" value="Ensembl"/>
</dbReference>
<dbReference type="GO" id="GO:0043584">
    <property type="term" value="P:nose development"/>
    <property type="evidence" value="ECO:0007669"/>
    <property type="project" value="Ensembl"/>
</dbReference>
<dbReference type="GO" id="GO:0060431">
    <property type="term" value="P:primary lung bud formation"/>
    <property type="evidence" value="ECO:0007669"/>
    <property type="project" value="Ensembl"/>
</dbReference>
<dbReference type="GO" id="GO:0042574">
    <property type="term" value="P:retinal metabolic process"/>
    <property type="evidence" value="ECO:0007669"/>
    <property type="project" value="Ensembl"/>
</dbReference>
<dbReference type="GO" id="GO:0002138">
    <property type="term" value="P:retinoic acid biosynthetic process"/>
    <property type="evidence" value="ECO:0007669"/>
    <property type="project" value="Ensembl"/>
</dbReference>
<dbReference type="GO" id="GO:0007601">
    <property type="term" value="P:visual perception"/>
    <property type="evidence" value="ECO:0007669"/>
    <property type="project" value="Ensembl"/>
</dbReference>
<dbReference type="CDD" id="cd05339">
    <property type="entry name" value="17beta-HSDXI-like_SDR_c"/>
    <property type="match status" value="1"/>
</dbReference>
<dbReference type="FunFam" id="3.40.50.720:FF:000177">
    <property type="entry name" value="Retinol dehydrogenase 10"/>
    <property type="match status" value="1"/>
</dbReference>
<dbReference type="Gene3D" id="3.40.50.720">
    <property type="entry name" value="NAD(P)-binding Rossmann-like Domain"/>
    <property type="match status" value="1"/>
</dbReference>
<dbReference type="InterPro" id="IPR036291">
    <property type="entry name" value="NAD(P)-bd_dom_sf"/>
</dbReference>
<dbReference type="InterPro" id="IPR020904">
    <property type="entry name" value="Sc_DH/Rdtase_CS"/>
</dbReference>
<dbReference type="InterPro" id="IPR002347">
    <property type="entry name" value="SDR_fam"/>
</dbReference>
<dbReference type="PANTHER" id="PTHR24322">
    <property type="entry name" value="PKSB"/>
    <property type="match status" value="1"/>
</dbReference>
<dbReference type="PANTHER" id="PTHR24322:SF736">
    <property type="entry name" value="RETINOL DEHYDROGENASE 10"/>
    <property type="match status" value="1"/>
</dbReference>
<dbReference type="Pfam" id="PF00106">
    <property type="entry name" value="adh_short"/>
    <property type="match status" value="1"/>
</dbReference>
<dbReference type="PRINTS" id="PR00081">
    <property type="entry name" value="GDHRDH"/>
</dbReference>
<dbReference type="PRINTS" id="PR00080">
    <property type="entry name" value="SDRFAMILY"/>
</dbReference>
<dbReference type="SUPFAM" id="SSF51735">
    <property type="entry name" value="NAD(P)-binding Rossmann-fold domains"/>
    <property type="match status" value="1"/>
</dbReference>
<dbReference type="PROSITE" id="PS00061">
    <property type="entry name" value="ADH_SHORT"/>
    <property type="match status" value="1"/>
</dbReference>
<gene>
    <name type="primary">RDH10</name>
</gene>
<reference key="1">
    <citation type="journal article" date="2002" name="Invest. Ophthalmol. Vis. Sci.">
        <title>Cloning and characterization of a novel all-trans retinol short-chain dehydrogenase/reductase from the RPE.</title>
        <authorList>
            <person name="Wu B.X."/>
            <person name="Chen Y."/>
            <person name="Chen Y."/>
            <person name="Fan J."/>
            <person name="Rohrer B."/>
            <person name="Crouch R.K."/>
            <person name="Ma J.-X."/>
        </authorList>
    </citation>
    <scope>NUCLEOTIDE SEQUENCE [MRNA]</scope>
    <scope>SUBCELLULAR LOCATION</scope>
    <scope>TISSUE SPECIFICITY</scope>
    <source>
        <tissue>Retinal pigment epithelium</tissue>
    </source>
</reference>
<reference key="2">
    <citation type="submission" date="2007-03" db="EMBL/GenBank/DDBJ databases">
        <authorList>
            <consortium name="NIH - Mammalian Gene Collection (MGC) project"/>
        </authorList>
    </citation>
    <scope>NUCLEOTIDE SEQUENCE [LARGE SCALE MRNA]</scope>
</reference>
<reference key="3">
    <citation type="journal article" date="2004" name="Invest. Ophthalmol. Vis. Sci.">
        <title>Identification of RDH10, an all-trans retinol dehydrogenase, in retinal Mueller cells.</title>
        <authorList>
            <person name="Wu B.X."/>
            <person name="Moiseyev G."/>
            <person name="Chen Y."/>
            <person name="Rohrer B."/>
            <person name="Crouch R.K."/>
            <person name="Ma J.-X."/>
        </authorList>
    </citation>
    <scope>TISSUE SPECIFICITY</scope>
</reference>
<evidence type="ECO:0000250" key="1"/>
<evidence type="ECO:0000255" key="2"/>
<evidence type="ECO:0000255" key="3">
    <source>
        <dbReference type="PROSITE-ProRule" id="PRU10001"/>
    </source>
</evidence>
<evidence type="ECO:0000269" key="4">
    <source>
    </source>
</evidence>
<evidence type="ECO:0000269" key="5">
    <source>
    </source>
</evidence>
<evidence type="ECO:0000305" key="6"/>
<feature type="chain" id="PRO_0000307681" description="Retinol dehydrogenase 10">
    <location>
        <begin position="1"/>
        <end position="341"/>
    </location>
</feature>
<feature type="transmembrane region" description="Helical; Signal-anchor" evidence="2">
    <location>
        <begin position="3"/>
        <end position="23"/>
    </location>
</feature>
<feature type="active site" description="Proton acceptor" evidence="3">
    <location>
        <position position="210"/>
    </location>
</feature>
<feature type="binding site" evidence="1">
    <location>
        <begin position="40"/>
        <end position="64"/>
    </location>
    <ligand>
        <name>NADP(+)</name>
        <dbReference type="ChEBI" id="CHEBI:58349"/>
    </ligand>
</feature>
<feature type="binding site" evidence="1">
    <location>
        <position position="197"/>
    </location>
    <ligand>
        <name>substrate</name>
    </ligand>
</feature>
<comment type="function">
    <text evidence="1">Retinol dehydrogenase with a clear preference for NADP. Converts all-trans-retinol to all-trans-retinal. Has no detectable activity towards 11-cis-retinol, 9-cis-retinol and 13-cis-retinol (By similarity).</text>
</comment>
<comment type="catalytic activity">
    <reaction>
        <text>all-trans-retinol + NADP(+) = all-trans-retinal + NADPH + H(+)</text>
        <dbReference type="Rhea" id="RHEA:25033"/>
        <dbReference type="ChEBI" id="CHEBI:15378"/>
        <dbReference type="ChEBI" id="CHEBI:17336"/>
        <dbReference type="ChEBI" id="CHEBI:17898"/>
        <dbReference type="ChEBI" id="CHEBI:57783"/>
        <dbReference type="ChEBI" id="CHEBI:58349"/>
        <dbReference type="EC" id="1.1.1.300"/>
    </reaction>
</comment>
<comment type="pathway">
    <text>Cofactor metabolism; retinol metabolism.</text>
</comment>
<comment type="subcellular location">
    <subcellularLocation>
        <location evidence="6">Microsome membrane</location>
        <topology evidence="6">Single-pass membrane protein</topology>
    </subcellularLocation>
    <subcellularLocation>
        <location evidence="6">Endoplasmic reticulum membrane</location>
        <topology evidence="6">Single-pass membrane protein</topology>
    </subcellularLocation>
</comment>
<comment type="tissue specificity">
    <text evidence="4 5">Detected in retinal pigment epithelium (at protein level). Detected in retina, retinal pigment epithelium, and at lower levels in cornea, liver, kidney, pancreas, lung, brain and skeletal muscle.</text>
</comment>
<comment type="similarity">
    <text evidence="6">Belongs to the short-chain dehydrogenases/reductases (SDR) family.</text>
</comment>
<organism>
    <name type="scientific">Bos taurus</name>
    <name type="common">Bovine</name>
    <dbReference type="NCBI Taxonomy" id="9913"/>
    <lineage>
        <taxon>Eukaryota</taxon>
        <taxon>Metazoa</taxon>
        <taxon>Chordata</taxon>
        <taxon>Craniata</taxon>
        <taxon>Vertebrata</taxon>
        <taxon>Euteleostomi</taxon>
        <taxon>Mammalia</taxon>
        <taxon>Eutheria</taxon>
        <taxon>Laurasiatheria</taxon>
        <taxon>Artiodactyla</taxon>
        <taxon>Ruminantia</taxon>
        <taxon>Pecora</taxon>
        <taxon>Bovidae</taxon>
        <taxon>Bovinae</taxon>
        <taxon>Bos</taxon>
    </lineage>
</organism>
<accession>Q8HZT6</accession>